<evidence type="ECO:0000305" key="1"/>
<keyword id="KW-0079">Bacteriocin immunity</keyword>
<keyword id="KW-0903">Direct protein sequencing</keyword>
<accession>Q06578</accession>
<organism>
    <name type="scientific">Pseudomonas aeruginosa</name>
    <dbReference type="NCBI Taxonomy" id="287"/>
    <lineage>
        <taxon>Bacteria</taxon>
        <taxon>Pseudomonadati</taxon>
        <taxon>Pseudomonadota</taxon>
        <taxon>Gammaproteobacteria</taxon>
        <taxon>Pseudomonadales</taxon>
        <taxon>Pseudomonadaceae</taxon>
        <taxon>Pseudomonas</taxon>
    </lineage>
</organism>
<proteinExistence type="evidence at protein level"/>
<reference key="1">
    <citation type="journal article" date="1993" name="J. Bacteriol.">
        <title>Molecular structures and functions of pyocins S1 and S2 in Pseudomonas aeruginosa.</title>
        <authorList>
            <person name="Sano Y."/>
            <person name="Matsui H."/>
            <person name="Kobayashi M."/>
            <person name="Kageyama M."/>
        </authorList>
    </citation>
    <scope>NUCLEOTIDE SEQUENCE [GENOMIC DNA]</scope>
    <scope>PROTEIN SEQUENCE OF 1-20</scope>
    <source>
        <strain>NIH-H</strain>
    </source>
</reference>
<sequence length="87" mass="10040">MKSKISEYTEKEFLEFVEDIYTNNKKKFPTEESHIQAVLEFKKLTEHPSGSDLLYYPNENREDSPAGVVKEVKEWRASKGLPGFKAG</sequence>
<comment type="similarity">
    <text evidence="1">Belongs to the colicins ColE2/ColE8/ColE9 and pyocins S1/S2 family.</text>
</comment>
<dbReference type="EMBL" id="D12707">
    <property type="protein sequence ID" value="BAA02202.1"/>
    <property type="molecule type" value="Genomic_DNA"/>
</dbReference>
<dbReference type="PIR" id="B36907">
    <property type="entry name" value="B36907"/>
</dbReference>
<dbReference type="SMR" id="Q06578"/>
<dbReference type="PATRIC" id="fig|287.1484.peg.1225"/>
<dbReference type="eggNOG" id="ENOG50334X2">
    <property type="taxonomic scope" value="Bacteria"/>
</dbReference>
<dbReference type="GO" id="GO:0015643">
    <property type="term" value="F:toxic substance binding"/>
    <property type="evidence" value="ECO:0007669"/>
    <property type="project" value="InterPro"/>
</dbReference>
<dbReference type="GO" id="GO:0030153">
    <property type="term" value="P:bacteriocin immunity"/>
    <property type="evidence" value="ECO:0007669"/>
    <property type="project" value="UniProtKB-KW"/>
</dbReference>
<dbReference type="CDD" id="cd16363">
    <property type="entry name" value="Col_Im_like"/>
    <property type="match status" value="1"/>
</dbReference>
<dbReference type="FunFam" id="1.10.1200.20:FF:000001">
    <property type="entry name" value="Colicin-E9 immunity protein"/>
    <property type="match status" value="1"/>
</dbReference>
<dbReference type="Gene3D" id="1.10.1200.20">
    <property type="entry name" value="Colicin E immunity protein"/>
    <property type="match status" value="1"/>
</dbReference>
<dbReference type="InterPro" id="IPR035900">
    <property type="entry name" value="Colicin_E_sf"/>
</dbReference>
<dbReference type="InterPro" id="IPR000290">
    <property type="entry name" value="Colicin_pyocin"/>
</dbReference>
<dbReference type="Pfam" id="PF01320">
    <property type="entry name" value="Colicin_Pyocin"/>
    <property type="match status" value="1"/>
</dbReference>
<dbReference type="PRINTS" id="PR01299">
    <property type="entry name" value="PYOCIN"/>
</dbReference>
<dbReference type="SUPFAM" id="SSF47345">
    <property type="entry name" value="Colicin E immunity proteins"/>
    <property type="match status" value="1"/>
</dbReference>
<name>IMM1_PSEAI</name>
<feature type="chain" id="PRO_0000218712" description="Pyocin-S1 immunity protein">
    <location>
        <begin position="1"/>
        <end position="87"/>
    </location>
</feature>
<gene>
    <name type="primary">imm1</name>
</gene>
<protein>
    <recommendedName>
        <fullName>Pyocin-S1 immunity protein</fullName>
    </recommendedName>
</protein>